<name>EFP_SALTO</name>
<organism>
    <name type="scientific">Salinispora tropica (strain ATCC BAA-916 / DSM 44818 / JCM 13857 / NBRC 105044 / CNB-440)</name>
    <dbReference type="NCBI Taxonomy" id="369723"/>
    <lineage>
        <taxon>Bacteria</taxon>
        <taxon>Bacillati</taxon>
        <taxon>Actinomycetota</taxon>
        <taxon>Actinomycetes</taxon>
        <taxon>Micromonosporales</taxon>
        <taxon>Micromonosporaceae</taxon>
        <taxon>Salinispora</taxon>
    </lineage>
</organism>
<proteinExistence type="inferred from homology"/>
<dbReference type="EMBL" id="CP000667">
    <property type="protein sequence ID" value="ABP54311.1"/>
    <property type="molecule type" value="Genomic_DNA"/>
</dbReference>
<dbReference type="RefSeq" id="WP_011905742.1">
    <property type="nucleotide sequence ID" value="NC_009380.1"/>
</dbReference>
<dbReference type="SMR" id="A4X611"/>
<dbReference type="STRING" id="369723.Strop_1849"/>
<dbReference type="KEGG" id="stp:Strop_1849"/>
<dbReference type="PATRIC" id="fig|369723.5.peg.1897"/>
<dbReference type="eggNOG" id="COG0231">
    <property type="taxonomic scope" value="Bacteria"/>
</dbReference>
<dbReference type="HOGENOM" id="CLU_074944_0_1_11"/>
<dbReference type="UniPathway" id="UPA00345"/>
<dbReference type="Proteomes" id="UP000000235">
    <property type="component" value="Chromosome"/>
</dbReference>
<dbReference type="GO" id="GO:0005737">
    <property type="term" value="C:cytoplasm"/>
    <property type="evidence" value="ECO:0007669"/>
    <property type="project" value="UniProtKB-SubCell"/>
</dbReference>
<dbReference type="GO" id="GO:0003746">
    <property type="term" value="F:translation elongation factor activity"/>
    <property type="evidence" value="ECO:0007669"/>
    <property type="project" value="UniProtKB-UniRule"/>
</dbReference>
<dbReference type="GO" id="GO:0043043">
    <property type="term" value="P:peptide biosynthetic process"/>
    <property type="evidence" value="ECO:0007669"/>
    <property type="project" value="InterPro"/>
</dbReference>
<dbReference type="CDD" id="cd04470">
    <property type="entry name" value="S1_EF-P_repeat_1"/>
    <property type="match status" value="1"/>
</dbReference>
<dbReference type="CDD" id="cd05794">
    <property type="entry name" value="S1_EF-P_repeat_2"/>
    <property type="match status" value="1"/>
</dbReference>
<dbReference type="FunFam" id="2.30.30.30:FF:000003">
    <property type="entry name" value="Elongation factor P"/>
    <property type="match status" value="1"/>
</dbReference>
<dbReference type="FunFam" id="2.40.50.140:FF:000004">
    <property type="entry name" value="Elongation factor P"/>
    <property type="match status" value="1"/>
</dbReference>
<dbReference type="FunFam" id="2.40.50.140:FF:000009">
    <property type="entry name" value="Elongation factor P"/>
    <property type="match status" value="1"/>
</dbReference>
<dbReference type="Gene3D" id="2.30.30.30">
    <property type="match status" value="1"/>
</dbReference>
<dbReference type="Gene3D" id="2.40.50.140">
    <property type="entry name" value="Nucleic acid-binding proteins"/>
    <property type="match status" value="2"/>
</dbReference>
<dbReference type="HAMAP" id="MF_00141">
    <property type="entry name" value="EF_P"/>
    <property type="match status" value="1"/>
</dbReference>
<dbReference type="InterPro" id="IPR015365">
    <property type="entry name" value="Elong-fact-P_C"/>
</dbReference>
<dbReference type="InterPro" id="IPR012340">
    <property type="entry name" value="NA-bd_OB-fold"/>
</dbReference>
<dbReference type="InterPro" id="IPR014722">
    <property type="entry name" value="Rib_uL2_dom2"/>
</dbReference>
<dbReference type="InterPro" id="IPR020599">
    <property type="entry name" value="Transl_elong_fac_P/YeiP"/>
</dbReference>
<dbReference type="InterPro" id="IPR013185">
    <property type="entry name" value="Transl_elong_KOW-like"/>
</dbReference>
<dbReference type="InterPro" id="IPR001059">
    <property type="entry name" value="Transl_elong_P/YeiP_cen"/>
</dbReference>
<dbReference type="InterPro" id="IPR013852">
    <property type="entry name" value="Transl_elong_P/YeiP_CS"/>
</dbReference>
<dbReference type="InterPro" id="IPR011768">
    <property type="entry name" value="Transl_elongation_fac_P"/>
</dbReference>
<dbReference type="InterPro" id="IPR008991">
    <property type="entry name" value="Translation_prot_SH3-like_sf"/>
</dbReference>
<dbReference type="NCBIfam" id="TIGR00038">
    <property type="entry name" value="efp"/>
    <property type="match status" value="1"/>
</dbReference>
<dbReference type="NCBIfam" id="NF001810">
    <property type="entry name" value="PRK00529.1"/>
    <property type="match status" value="1"/>
</dbReference>
<dbReference type="PANTHER" id="PTHR30053">
    <property type="entry name" value="ELONGATION FACTOR P"/>
    <property type="match status" value="1"/>
</dbReference>
<dbReference type="PANTHER" id="PTHR30053:SF12">
    <property type="entry name" value="ELONGATION FACTOR P (EF-P) FAMILY PROTEIN"/>
    <property type="match status" value="1"/>
</dbReference>
<dbReference type="Pfam" id="PF01132">
    <property type="entry name" value="EFP"/>
    <property type="match status" value="1"/>
</dbReference>
<dbReference type="Pfam" id="PF08207">
    <property type="entry name" value="EFP_N"/>
    <property type="match status" value="1"/>
</dbReference>
<dbReference type="Pfam" id="PF09285">
    <property type="entry name" value="Elong-fact-P_C"/>
    <property type="match status" value="1"/>
</dbReference>
<dbReference type="PIRSF" id="PIRSF005901">
    <property type="entry name" value="EF-P"/>
    <property type="match status" value="1"/>
</dbReference>
<dbReference type="SMART" id="SM01185">
    <property type="entry name" value="EFP"/>
    <property type="match status" value="1"/>
</dbReference>
<dbReference type="SMART" id="SM00841">
    <property type="entry name" value="Elong-fact-P_C"/>
    <property type="match status" value="1"/>
</dbReference>
<dbReference type="SUPFAM" id="SSF50249">
    <property type="entry name" value="Nucleic acid-binding proteins"/>
    <property type="match status" value="2"/>
</dbReference>
<dbReference type="SUPFAM" id="SSF50104">
    <property type="entry name" value="Translation proteins SH3-like domain"/>
    <property type="match status" value="1"/>
</dbReference>
<dbReference type="PROSITE" id="PS01275">
    <property type="entry name" value="EFP"/>
    <property type="match status" value="1"/>
</dbReference>
<protein>
    <recommendedName>
        <fullName evidence="1">Elongation factor P</fullName>
        <shortName evidence="1">EF-P</shortName>
    </recommendedName>
</protein>
<gene>
    <name evidence="1" type="primary">efp</name>
    <name type="ordered locus">Strop_1849</name>
</gene>
<sequence>MATTNDLKNGMVLNLDGELWAVVEFQHVKPGKGGAFVRTTLKNVLSGKVVDKTFNAGTKVETATVDKRTMQYLYADGEDFVFMDLETFDQINVLGDTVGEAANYLLPEAEATVATHEGVPLYVELPTSVVLEITYTEPGLQGDRSTGGSKPATVETGATVQVPLFITTGEKIKVDTRDGRYLGRA</sequence>
<accession>A4X611</accession>
<reference key="1">
    <citation type="journal article" date="2007" name="Proc. Natl. Acad. Sci. U.S.A.">
        <title>Genome sequencing reveals complex secondary metabolome in the marine actinomycete Salinispora tropica.</title>
        <authorList>
            <person name="Udwary D.W."/>
            <person name="Zeigler L."/>
            <person name="Asolkar R.N."/>
            <person name="Singan V."/>
            <person name="Lapidus A."/>
            <person name="Fenical W."/>
            <person name="Jensen P.R."/>
            <person name="Moore B.S."/>
        </authorList>
    </citation>
    <scope>NUCLEOTIDE SEQUENCE [LARGE SCALE GENOMIC DNA]</scope>
    <source>
        <strain>ATCC BAA-916 / DSM 44818 / JCM 13857 / NBRC 105044 / CNB-440</strain>
    </source>
</reference>
<feature type="chain" id="PRO_1000076531" description="Elongation factor P">
    <location>
        <begin position="1"/>
        <end position="185"/>
    </location>
</feature>
<evidence type="ECO:0000255" key="1">
    <source>
        <dbReference type="HAMAP-Rule" id="MF_00141"/>
    </source>
</evidence>
<keyword id="KW-0963">Cytoplasm</keyword>
<keyword id="KW-0251">Elongation factor</keyword>
<keyword id="KW-0648">Protein biosynthesis</keyword>
<keyword id="KW-1185">Reference proteome</keyword>
<comment type="function">
    <text evidence="1">Involved in peptide bond synthesis. Stimulates efficient translation and peptide-bond synthesis on native or reconstituted 70S ribosomes in vitro. Probably functions indirectly by altering the affinity of the ribosome for aminoacyl-tRNA, thus increasing their reactivity as acceptors for peptidyl transferase.</text>
</comment>
<comment type="pathway">
    <text evidence="1">Protein biosynthesis; polypeptide chain elongation.</text>
</comment>
<comment type="subcellular location">
    <subcellularLocation>
        <location evidence="1">Cytoplasm</location>
    </subcellularLocation>
</comment>
<comment type="similarity">
    <text evidence="1">Belongs to the elongation factor P family.</text>
</comment>